<feature type="chain" id="PRO_0000132184" description="Small ribosomal subunit protein uS13">
    <location>
        <begin position="1"/>
        <end position="149"/>
    </location>
</feature>
<feature type="region of interest" description="Disordered" evidence="2">
    <location>
        <begin position="118"/>
        <end position="149"/>
    </location>
</feature>
<organism>
    <name type="scientific">Methanothermobacter thermautotrophicus (strain ATCC 29096 / DSM 1053 / JCM 10044 / NBRC 100330 / Delta H)</name>
    <name type="common">Methanobacterium thermoautotrophicum</name>
    <dbReference type="NCBI Taxonomy" id="187420"/>
    <lineage>
        <taxon>Archaea</taxon>
        <taxon>Methanobacteriati</taxon>
        <taxon>Methanobacteriota</taxon>
        <taxon>Methanomada group</taxon>
        <taxon>Methanobacteria</taxon>
        <taxon>Methanobacteriales</taxon>
        <taxon>Methanobacteriaceae</taxon>
        <taxon>Methanothermobacter</taxon>
    </lineage>
</organism>
<evidence type="ECO:0000255" key="1">
    <source>
        <dbReference type="HAMAP-Rule" id="MF_01315"/>
    </source>
</evidence>
<evidence type="ECO:0000256" key="2">
    <source>
        <dbReference type="SAM" id="MobiDB-lite"/>
    </source>
</evidence>
<evidence type="ECO:0000305" key="3"/>
<name>RS13_METTH</name>
<proteinExistence type="inferred from homology"/>
<sequence length="149" mass="17415">MEEEFKHMVRIARKDIDGNKTMENALTSIKGVGKALSRAIIMSAGYDLNQRIGYLSDEEIERLEEAIKNPAKYNIPSWMINRRNDYETGEDKHLIESDLEMCLREDLNRMRKTRSYKGRRHELGLPVRGQRTKSTFRKGSSVGVRRKKR</sequence>
<accession>O26141</accession>
<gene>
    <name evidence="1" type="primary">rps13</name>
    <name type="ordered locus">MTH_34</name>
</gene>
<dbReference type="EMBL" id="AE000666">
    <property type="protein sequence ID" value="AAB84542.1"/>
    <property type="molecule type" value="Genomic_DNA"/>
</dbReference>
<dbReference type="PIR" id="F69143">
    <property type="entry name" value="F69143"/>
</dbReference>
<dbReference type="RefSeq" id="WP_010875675.1">
    <property type="nucleotide sequence ID" value="NC_000916.1"/>
</dbReference>
<dbReference type="SMR" id="O26141"/>
<dbReference type="FunCoup" id="O26141">
    <property type="interactions" value="175"/>
</dbReference>
<dbReference type="STRING" id="187420.MTH_34"/>
<dbReference type="PaxDb" id="187420-MTH_34"/>
<dbReference type="EnsemblBacteria" id="AAB84542">
    <property type="protein sequence ID" value="AAB84542"/>
    <property type="gene ID" value="MTH_34"/>
</dbReference>
<dbReference type="KEGG" id="mth:MTH_34"/>
<dbReference type="PATRIC" id="fig|187420.15.peg.33"/>
<dbReference type="HOGENOM" id="CLU_103849_0_1_2"/>
<dbReference type="InParanoid" id="O26141"/>
<dbReference type="Proteomes" id="UP000005223">
    <property type="component" value="Chromosome"/>
</dbReference>
<dbReference type="GO" id="GO:0005829">
    <property type="term" value="C:cytosol"/>
    <property type="evidence" value="ECO:0007669"/>
    <property type="project" value="TreeGrafter"/>
</dbReference>
<dbReference type="GO" id="GO:0015935">
    <property type="term" value="C:small ribosomal subunit"/>
    <property type="evidence" value="ECO:0007669"/>
    <property type="project" value="TreeGrafter"/>
</dbReference>
<dbReference type="GO" id="GO:0019843">
    <property type="term" value="F:rRNA binding"/>
    <property type="evidence" value="ECO:0007669"/>
    <property type="project" value="UniProtKB-UniRule"/>
</dbReference>
<dbReference type="GO" id="GO:0003735">
    <property type="term" value="F:structural constituent of ribosome"/>
    <property type="evidence" value="ECO:0007669"/>
    <property type="project" value="InterPro"/>
</dbReference>
<dbReference type="GO" id="GO:0006412">
    <property type="term" value="P:translation"/>
    <property type="evidence" value="ECO:0007669"/>
    <property type="project" value="UniProtKB-UniRule"/>
</dbReference>
<dbReference type="FunFam" id="1.10.8.50:FF:000001">
    <property type="entry name" value="30S ribosomal protein S13"/>
    <property type="match status" value="1"/>
</dbReference>
<dbReference type="FunFam" id="4.10.910.10:FF:000002">
    <property type="entry name" value="40S ribosomal protein S18"/>
    <property type="match status" value="1"/>
</dbReference>
<dbReference type="Gene3D" id="1.10.8.50">
    <property type="match status" value="1"/>
</dbReference>
<dbReference type="Gene3D" id="4.10.910.10">
    <property type="entry name" value="30s ribosomal protein s13, domain 2"/>
    <property type="match status" value="1"/>
</dbReference>
<dbReference type="HAMAP" id="MF_01315">
    <property type="entry name" value="Ribosomal_uS13"/>
    <property type="match status" value="1"/>
</dbReference>
<dbReference type="InterPro" id="IPR027437">
    <property type="entry name" value="Rbsml_uS13_C"/>
</dbReference>
<dbReference type="InterPro" id="IPR001892">
    <property type="entry name" value="Ribosomal_uS13"/>
</dbReference>
<dbReference type="InterPro" id="IPR010979">
    <property type="entry name" value="Ribosomal_uS13-like_H2TH"/>
</dbReference>
<dbReference type="InterPro" id="IPR019977">
    <property type="entry name" value="Ribosomal_uS13_archaeal"/>
</dbReference>
<dbReference type="InterPro" id="IPR018269">
    <property type="entry name" value="Ribosomal_uS13_CS"/>
</dbReference>
<dbReference type="NCBIfam" id="NF003140">
    <property type="entry name" value="PRK04053.1"/>
    <property type="match status" value="1"/>
</dbReference>
<dbReference type="NCBIfam" id="TIGR03629">
    <property type="entry name" value="uS13_arch"/>
    <property type="match status" value="1"/>
</dbReference>
<dbReference type="PANTHER" id="PTHR10871">
    <property type="entry name" value="30S RIBOSOMAL PROTEIN S13/40S RIBOSOMAL PROTEIN S18"/>
    <property type="match status" value="1"/>
</dbReference>
<dbReference type="PANTHER" id="PTHR10871:SF3">
    <property type="entry name" value="SMALL RIBOSOMAL SUBUNIT PROTEIN US13"/>
    <property type="match status" value="1"/>
</dbReference>
<dbReference type="Pfam" id="PF00416">
    <property type="entry name" value="Ribosomal_S13"/>
    <property type="match status" value="1"/>
</dbReference>
<dbReference type="PIRSF" id="PIRSF002134">
    <property type="entry name" value="Ribosomal_S13"/>
    <property type="match status" value="1"/>
</dbReference>
<dbReference type="SUPFAM" id="SSF46946">
    <property type="entry name" value="S13-like H2TH domain"/>
    <property type="match status" value="1"/>
</dbReference>
<dbReference type="PROSITE" id="PS00646">
    <property type="entry name" value="RIBOSOMAL_S13_1"/>
    <property type="match status" value="1"/>
</dbReference>
<dbReference type="PROSITE" id="PS50159">
    <property type="entry name" value="RIBOSOMAL_S13_2"/>
    <property type="match status" value="1"/>
</dbReference>
<comment type="function">
    <text evidence="1">Located at the top of the head of the 30S subunit, it contacts several helices of the 16S rRNA. In the 70S ribosome it contacts the 23S rRNA (bridge B1a) and protein L5 of the 50S subunit (bridge B1b), connecting the 2 subunits; these bridges are implicated in subunit movement.</text>
</comment>
<comment type="subunit">
    <text evidence="1">Part of the 30S ribosomal subunit. Forms a loose heterodimer with protein S19. Forms two bridges to the 50S subunit in the 70S ribosome.</text>
</comment>
<comment type="similarity">
    <text evidence="1">Belongs to the universal ribosomal protein uS13 family.</text>
</comment>
<keyword id="KW-1185">Reference proteome</keyword>
<keyword id="KW-0687">Ribonucleoprotein</keyword>
<keyword id="KW-0689">Ribosomal protein</keyword>
<keyword id="KW-0694">RNA-binding</keyword>
<keyword id="KW-0699">rRNA-binding</keyword>
<protein>
    <recommendedName>
        <fullName evidence="1">Small ribosomal subunit protein uS13</fullName>
    </recommendedName>
    <alternativeName>
        <fullName evidence="3">30S ribosomal protein S13</fullName>
    </alternativeName>
</protein>
<reference key="1">
    <citation type="journal article" date="1997" name="J. Bacteriol.">
        <title>Complete genome sequence of Methanobacterium thermoautotrophicum deltaH: functional analysis and comparative genomics.</title>
        <authorList>
            <person name="Smith D.R."/>
            <person name="Doucette-Stamm L.A."/>
            <person name="Deloughery C."/>
            <person name="Lee H.-M."/>
            <person name="Dubois J."/>
            <person name="Aldredge T."/>
            <person name="Bashirzadeh R."/>
            <person name="Blakely D."/>
            <person name="Cook R."/>
            <person name="Gilbert K."/>
            <person name="Harrison D."/>
            <person name="Hoang L."/>
            <person name="Keagle P."/>
            <person name="Lumm W."/>
            <person name="Pothier B."/>
            <person name="Qiu D."/>
            <person name="Spadafora R."/>
            <person name="Vicare R."/>
            <person name="Wang Y."/>
            <person name="Wierzbowski J."/>
            <person name="Gibson R."/>
            <person name="Jiwani N."/>
            <person name="Caruso A."/>
            <person name="Bush D."/>
            <person name="Safer H."/>
            <person name="Patwell D."/>
            <person name="Prabhakar S."/>
            <person name="McDougall S."/>
            <person name="Shimer G."/>
            <person name="Goyal A."/>
            <person name="Pietrovski S."/>
            <person name="Church G.M."/>
            <person name="Daniels C.J."/>
            <person name="Mao J.-I."/>
            <person name="Rice P."/>
            <person name="Noelling J."/>
            <person name="Reeve J.N."/>
        </authorList>
    </citation>
    <scope>NUCLEOTIDE SEQUENCE [LARGE SCALE GENOMIC DNA]</scope>
    <source>
        <strain>ATCC 29096 / DSM 1053 / JCM 10044 / NBRC 100330 / Delta H</strain>
    </source>
</reference>